<protein>
    <recommendedName>
        <fullName>Protein Wnt-10</fullName>
        <shortName>XWnt-10</shortName>
    </recommendedName>
</protein>
<keyword id="KW-0217">Developmental protein</keyword>
<keyword id="KW-1015">Disulfide bond</keyword>
<keyword id="KW-0272">Extracellular matrix</keyword>
<keyword id="KW-0325">Glycoprotein</keyword>
<keyword id="KW-0449">Lipoprotein</keyword>
<keyword id="KW-1185">Reference proteome</keyword>
<keyword id="KW-0964">Secreted</keyword>
<keyword id="KW-0879">Wnt signaling pathway</keyword>
<sequence length="128" mass="14906">QECKCHGTSGSCQFKTCWYVTPDFRAVSTLMRDKLQRAVFVNSRNKNSGAFHPRLNKKRLQRELVYFEKSPDFCEKDPRVDSLGTQGRVCNKTSQQMDNCASLCCGRGHNVLMQTRRERCNCRFHWCC</sequence>
<evidence type="ECO:0000250" key="1">
    <source>
        <dbReference type="UniProtKB" id="P27467"/>
    </source>
</evidence>
<evidence type="ECO:0000250" key="2">
    <source>
        <dbReference type="UniProtKB" id="P28026"/>
    </source>
</evidence>
<evidence type="ECO:0000250" key="3">
    <source>
        <dbReference type="UniProtKB" id="P56704"/>
    </source>
</evidence>
<evidence type="ECO:0000255" key="4"/>
<evidence type="ECO:0000305" key="5"/>
<proteinExistence type="evidence at transcript level"/>
<feature type="chain" id="PRO_0000200663" description="Protein Wnt-10">
    <location>
        <begin position="1" status="less than"/>
        <end position="128" status="greater than"/>
    </location>
</feature>
<feature type="lipid moiety-binding region" description="O-palmitoleoyl serine; by PORCN" evidence="3">
    <location>
        <position position="9"/>
    </location>
</feature>
<feature type="glycosylation site" description="N-linked (GlcNAc...) asparagine" evidence="4">
    <location>
        <position position="91"/>
    </location>
</feature>
<feature type="disulfide bond" evidence="2">
    <location>
        <begin position="3"/>
        <end position="17"/>
    </location>
</feature>
<feature type="disulfide bond" evidence="2">
    <location>
        <begin position="5"/>
        <end position="12"/>
    </location>
</feature>
<feature type="disulfide bond" evidence="2">
    <location>
        <begin position="74"/>
        <end position="105"/>
    </location>
</feature>
<feature type="disulfide bond" evidence="2">
    <location>
        <begin position="90"/>
        <end position="100"/>
    </location>
</feature>
<feature type="disulfide bond" evidence="2">
    <location>
        <begin position="127"/>
        <end position="128"/>
    </location>
</feature>
<feature type="non-terminal residue">
    <location>
        <position position="1"/>
    </location>
</feature>
<feature type="non-terminal residue">
    <location>
        <position position="128"/>
    </location>
</feature>
<organism>
    <name type="scientific">Xenopus laevis</name>
    <name type="common">African clawed frog</name>
    <dbReference type="NCBI Taxonomy" id="8355"/>
    <lineage>
        <taxon>Eukaryota</taxon>
        <taxon>Metazoa</taxon>
        <taxon>Chordata</taxon>
        <taxon>Craniata</taxon>
        <taxon>Vertebrata</taxon>
        <taxon>Euteleostomi</taxon>
        <taxon>Amphibia</taxon>
        <taxon>Batrachia</taxon>
        <taxon>Anura</taxon>
        <taxon>Pipoidea</taxon>
        <taxon>Pipidae</taxon>
        <taxon>Xenopodinae</taxon>
        <taxon>Xenopus</taxon>
        <taxon>Xenopus</taxon>
    </lineage>
</organism>
<gene>
    <name type="primary">wnt10</name>
</gene>
<accession>P31292</accession>
<name>WNT10_XENLA</name>
<dbReference type="EMBL" id="L07530">
    <property type="protein sequence ID" value="AAA49983.1"/>
    <property type="molecule type" value="mRNA"/>
</dbReference>
<dbReference type="PIR" id="I51571">
    <property type="entry name" value="I51571"/>
</dbReference>
<dbReference type="SMR" id="P31292"/>
<dbReference type="GlyCosmos" id="P31292">
    <property type="glycosylation" value="1 site, No reported glycans"/>
</dbReference>
<dbReference type="Proteomes" id="UP000186698">
    <property type="component" value="Unplaced"/>
</dbReference>
<dbReference type="GO" id="GO:0005615">
    <property type="term" value="C:extracellular space"/>
    <property type="evidence" value="ECO:0007669"/>
    <property type="project" value="TreeGrafter"/>
</dbReference>
<dbReference type="GO" id="GO:0005125">
    <property type="term" value="F:cytokine activity"/>
    <property type="evidence" value="ECO:0007669"/>
    <property type="project" value="TreeGrafter"/>
</dbReference>
<dbReference type="GO" id="GO:0005109">
    <property type="term" value="F:frizzled binding"/>
    <property type="evidence" value="ECO:0007669"/>
    <property type="project" value="TreeGrafter"/>
</dbReference>
<dbReference type="GO" id="GO:0060070">
    <property type="term" value="P:canonical Wnt signaling pathway"/>
    <property type="evidence" value="ECO:0007669"/>
    <property type="project" value="TreeGrafter"/>
</dbReference>
<dbReference type="GO" id="GO:0045165">
    <property type="term" value="P:cell fate commitment"/>
    <property type="evidence" value="ECO:0007669"/>
    <property type="project" value="TreeGrafter"/>
</dbReference>
<dbReference type="GO" id="GO:0030182">
    <property type="term" value="P:neuron differentiation"/>
    <property type="evidence" value="ECO:0007669"/>
    <property type="project" value="TreeGrafter"/>
</dbReference>
<dbReference type="FunFam" id="3.30.2460.20:FF:000001">
    <property type="entry name" value="Wnt homolog"/>
    <property type="match status" value="1"/>
</dbReference>
<dbReference type="Gene3D" id="3.30.2460.20">
    <property type="match status" value="1"/>
</dbReference>
<dbReference type="InterPro" id="IPR005817">
    <property type="entry name" value="Wnt"/>
</dbReference>
<dbReference type="InterPro" id="IPR043158">
    <property type="entry name" value="Wnt_C"/>
</dbReference>
<dbReference type="InterPro" id="IPR018161">
    <property type="entry name" value="Wnt_CS"/>
</dbReference>
<dbReference type="PANTHER" id="PTHR12027:SF76">
    <property type="entry name" value="PROTEIN WNT-10B"/>
    <property type="match status" value="1"/>
</dbReference>
<dbReference type="PANTHER" id="PTHR12027">
    <property type="entry name" value="WNT RELATED"/>
    <property type="match status" value="1"/>
</dbReference>
<dbReference type="Pfam" id="PF00110">
    <property type="entry name" value="wnt"/>
    <property type="match status" value="1"/>
</dbReference>
<dbReference type="PRINTS" id="PR01349">
    <property type="entry name" value="WNTPROTEIN"/>
</dbReference>
<dbReference type="SMART" id="SM00097">
    <property type="entry name" value="WNT1"/>
    <property type="match status" value="1"/>
</dbReference>
<dbReference type="PROSITE" id="PS00246">
    <property type="entry name" value="WNT1"/>
    <property type="match status" value="1"/>
</dbReference>
<comment type="function">
    <text>Ligand for members of the frizzled family of seven transmembrane receptors. Probable developmental protein. May be a signaling molecule which affects the development of discrete regions of tissues. Is likely to signal over only few cell diameters.</text>
</comment>
<comment type="subcellular location">
    <subcellularLocation>
        <location>Secreted</location>
        <location>Extracellular space</location>
        <location>Extracellular matrix</location>
    </subcellularLocation>
</comment>
<comment type="tissue specificity">
    <text>In embryo, in dorsal hindbrain; in adults, in brain.</text>
</comment>
<comment type="developmental stage">
    <text>Tailbud onwards.</text>
</comment>
<comment type="PTM">
    <text evidence="1 3">Palmitoleoylation is required for efficient binding to frizzled receptors. Depalmitoleoylation leads to Wnt signaling pathway inhibition.</text>
</comment>
<comment type="similarity">
    <text evidence="5">Belongs to the Wnt family.</text>
</comment>
<reference key="1">
    <citation type="journal article" date="1992" name="Oncogene">
        <title>Cloning and developmental expression in Xenopus laevis of seven additional members of the Wnt family.</title>
        <authorList>
            <person name="Wolda S.L."/>
            <person name="Moon R.T."/>
        </authorList>
    </citation>
    <scope>NUCLEOTIDE SEQUENCE [MRNA]</scope>
</reference>